<name>RNL_ARATH</name>
<dbReference type="EC" id="6.5.1.3" evidence="1 4 5"/>
<dbReference type="EMBL" id="AC026875">
    <property type="protein sequence ID" value="AAF79821.1"/>
    <property type="status" value="ALT_SEQ"/>
    <property type="molecule type" value="Genomic_DNA"/>
</dbReference>
<dbReference type="EMBL" id="CP002684">
    <property type="protein sequence ID" value="AEE28210.1"/>
    <property type="molecule type" value="Genomic_DNA"/>
</dbReference>
<dbReference type="EMBL" id="AK226218">
    <property type="protein sequence ID" value="BAE98383.1"/>
    <property type="molecule type" value="mRNA"/>
</dbReference>
<dbReference type="EMBL" id="AK226707">
    <property type="protein sequence ID" value="BAE98814.1"/>
    <property type="molecule type" value="mRNA"/>
</dbReference>
<dbReference type="EMBL" id="AK230326">
    <property type="protein sequence ID" value="BAF02126.1"/>
    <property type="molecule type" value="mRNA"/>
</dbReference>
<dbReference type="EMBL" id="U63815">
    <property type="protein sequence ID" value="AAB07881.1"/>
    <property type="molecule type" value="Genomic_DNA"/>
</dbReference>
<dbReference type="RefSeq" id="NP_172269.2">
    <molecule id="Q0WL81-1"/>
    <property type="nucleotide sequence ID" value="NM_100665.3"/>
</dbReference>
<dbReference type="FunCoup" id="Q0WL81">
    <property type="interactions" value="979"/>
</dbReference>
<dbReference type="STRING" id="3702.Q0WL81"/>
<dbReference type="iPTMnet" id="Q0WL81"/>
<dbReference type="PaxDb" id="3702-AT1G07910.2"/>
<dbReference type="ProteomicsDB" id="227966">
    <molecule id="Q0WL81-1"/>
</dbReference>
<dbReference type="EnsemblPlants" id="AT1G07910.1">
    <molecule id="Q0WL81-1"/>
    <property type="protein sequence ID" value="AT1G07910.1"/>
    <property type="gene ID" value="AT1G07910"/>
</dbReference>
<dbReference type="GeneID" id="837306"/>
<dbReference type="Gramene" id="AT1G07910.1">
    <molecule id="Q0WL81-1"/>
    <property type="protein sequence ID" value="AT1G07910.1"/>
    <property type="gene ID" value="AT1G07910"/>
</dbReference>
<dbReference type="KEGG" id="ath:AT1G07910"/>
<dbReference type="Araport" id="AT1G07910"/>
<dbReference type="TAIR" id="AT1G07910">
    <property type="gene designation" value="RNL"/>
</dbReference>
<dbReference type="eggNOG" id="ENOG502QSM5">
    <property type="taxonomic scope" value="Eukaryota"/>
</dbReference>
<dbReference type="HOGENOM" id="CLU_008781_0_0_1"/>
<dbReference type="InParanoid" id="Q0WL81"/>
<dbReference type="PhylomeDB" id="Q0WL81"/>
<dbReference type="BioCyc" id="ARA:AT1G07910-MONOMER"/>
<dbReference type="PRO" id="PR:Q0WL81"/>
<dbReference type="Proteomes" id="UP000006548">
    <property type="component" value="Chromosome 1"/>
</dbReference>
<dbReference type="ExpressionAtlas" id="Q0WL81">
    <property type="expression patterns" value="baseline and differential"/>
</dbReference>
<dbReference type="GO" id="GO:0005737">
    <property type="term" value="C:cytoplasm"/>
    <property type="evidence" value="ECO:0000314"/>
    <property type="project" value="UniProtKB"/>
</dbReference>
<dbReference type="GO" id="GO:0005634">
    <property type="term" value="C:nucleus"/>
    <property type="evidence" value="ECO:0007669"/>
    <property type="project" value="UniProtKB-SubCell"/>
</dbReference>
<dbReference type="GO" id="GO:0005524">
    <property type="term" value="F:ATP binding"/>
    <property type="evidence" value="ECO:0007669"/>
    <property type="project" value="UniProtKB-KW"/>
</dbReference>
<dbReference type="GO" id="GO:0004519">
    <property type="term" value="F:endonuclease activity"/>
    <property type="evidence" value="ECO:0007669"/>
    <property type="project" value="UniProtKB-KW"/>
</dbReference>
<dbReference type="GO" id="GO:0016301">
    <property type="term" value="F:kinase activity"/>
    <property type="evidence" value="ECO:0007669"/>
    <property type="project" value="UniProtKB-KW"/>
</dbReference>
<dbReference type="GO" id="GO:0046872">
    <property type="term" value="F:metal ion binding"/>
    <property type="evidence" value="ECO:0007669"/>
    <property type="project" value="UniProtKB-KW"/>
</dbReference>
<dbReference type="GO" id="GO:0003729">
    <property type="term" value="F:mRNA binding"/>
    <property type="evidence" value="ECO:0000314"/>
    <property type="project" value="UniProtKB"/>
</dbReference>
<dbReference type="GO" id="GO:0003972">
    <property type="term" value="F:RNA ligase (ATP) activity"/>
    <property type="evidence" value="ECO:0000314"/>
    <property type="project" value="UniProtKB"/>
</dbReference>
<dbReference type="GO" id="GO:0009734">
    <property type="term" value="P:auxin-activated signaling pathway"/>
    <property type="evidence" value="ECO:0007669"/>
    <property type="project" value="UniProtKB-KW"/>
</dbReference>
<dbReference type="GO" id="GO:0010928">
    <property type="term" value="P:regulation of auxin mediated signaling pathway"/>
    <property type="evidence" value="ECO:0000315"/>
    <property type="project" value="UniProtKB"/>
</dbReference>
<dbReference type="GO" id="GO:0042245">
    <property type="term" value="P:RNA repair"/>
    <property type="evidence" value="ECO:0000314"/>
    <property type="project" value="UniProtKB"/>
</dbReference>
<dbReference type="GO" id="GO:0006412">
    <property type="term" value="P:translation"/>
    <property type="evidence" value="ECO:0007669"/>
    <property type="project" value="UniProtKB-KW"/>
</dbReference>
<dbReference type="GO" id="GO:0006388">
    <property type="term" value="P:tRNA splicing, via endonucleolytic cleavage and ligation"/>
    <property type="evidence" value="ECO:0000314"/>
    <property type="project" value="UniProtKB"/>
</dbReference>
<dbReference type="InterPro" id="IPR015965">
    <property type="entry name" value="tRNA_lig_PDEase"/>
</dbReference>
<dbReference type="InterPro" id="IPR038837">
    <property type="entry name" value="tRNA_ligase_1"/>
</dbReference>
<dbReference type="PANTHER" id="PTHR35460">
    <property type="entry name" value="TRNA LIGASE 1"/>
    <property type="match status" value="1"/>
</dbReference>
<dbReference type="PANTHER" id="PTHR35460:SF1">
    <property type="entry name" value="TRNA LIGASE 1"/>
    <property type="match status" value="1"/>
</dbReference>
<dbReference type="Pfam" id="PF08302">
    <property type="entry name" value="tRNA_lig_CPD"/>
    <property type="match status" value="1"/>
</dbReference>
<keyword id="KW-0025">Alternative splicing</keyword>
<keyword id="KW-0067">ATP-binding</keyword>
<keyword id="KW-0927">Auxin signaling pathway</keyword>
<keyword id="KW-0963">Cytoplasm</keyword>
<keyword id="KW-0255">Endonuclease</keyword>
<keyword id="KW-0378">Hydrolase</keyword>
<keyword id="KW-0418">Kinase</keyword>
<keyword id="KW-0436">Ligase</keyword>
<keyword id="KW-0460">Magnesium</keyword>
<keyword id="KW-0479">Metal-binding</keyword>
<keyword id="KW-0511">Multifunctional enzyme</keyword>
<keyword id="KW-0540">Nuclease</keyword>
<keyword id="KW-0547">Nucleotide-binding</keyword>
<keyword id="KW-0539">Nucleus</keyword>
<keyword id="KW-0648">Protein biosynthesis</keyword>
<keyword id="KW-1185">Reference proteome</keyword>
<keyword id="KW-0692">RNA repair</keyword>
<keyword id="KW-0694">RNA-binding</keyword>
<keyword id="KW-0346">Stress response</keyword>
<keyword id="KW-0808">Transferase</keyword>
<keyword id="KW-0819">tRNA processing</keyword>
<organism>
    <name type="scientific">Arabidopsis thaliana</name>
    <name type="common">Mouse-ear cress</name>
    <dbReference type="NCBI Taxonomy" id="3702"/>
    <lineage>
        <taxon>Eukaryota</taxon>
        <taxon>Viridiplantae</taxon>
        <taxon>Streptophyta</taxon>
        <taxon>Embryophyta</taxon>
        <taxon>Tracheophyta</taxon>
        <taxon>Spermatophyta</taxon>
        <taxon>Magnoliopsida</taxon>
        <taxon>eudicotyledons</taxon>
        <taxon>Gunneridae</taxon>
        <taxon>Pentapetalae</taxon>
        <taxon>rosids</taxon>
        <taxon>malvids</taxon>
        <taxon>Brassicales</taxon>
        <taxon>Brassicaceae</taxon>
        <taxon>Camelineae</taxon>
        <taxon>Arabidopsis</taxon>
    </lineage>
</organism>
<feature type="chain" id="PRO_0000439342" description="tRNA ligase 1">
    <location>
        <begin position="1"/>
        <end position="1104"/>
    </location>
</feature>
<feature type="active site" description="N6-AMP-lysine intermediate" evidence="4">
    <location>
        <position position="152"/>
    </location>
</feature>
<feature type="splice variant" id="VSP_058828" description="In isoform 2.">
    <location>
        <begin position="1"/>
        <end position="576"/>
    </location>
</feature>
<feature type="mutagenesis site" description="Loss of tRNA ligase activity due to impaired ligase activity, but normal end-healing." evidence="2 4 5">
    <original>K</original>
    <variation>A</variation>
    <location>
        <position position="152"/>
    </location>
</feature>
<feature type="mutagenesis site" description="Loss of tRNA ligase activity." evidence="2">
    <original>E</original>
    <variation>A</variation>
    <location>
        <position position="218"/>
    </location>
</feature>
<feature type="mutagenesis site" description="Loss of tRNA ligase activity." evidence="2">
    <original>E</original>
    <variation>A</variation>
    <location>
        <position position="326"/>
    </location>
</feature>
<feature type="mutagenesis site" description="Loss of tRNA ligase activity." evidence="2">
    <original>K</original>
    <variation>A</variation>
    <location>
        <position position="541"/>
    </location>
</feature>
<feature type="mutagenesis site" description="Loss of tRNA ligase activity." evidence="2">
    <original>K</original>
    <variation>A</variation>
    <location>
        <position position="543"/>
    </location>
</feature>
<feature type="mutagenesis site" description="Loss of kinase activity, but conserved CPDase activity." evidence="4 5">
    <original>KS</original>
    <variation>AA</variation>
    <location>
        <begin position="700"/>
        <end position="701"/>
    </location>
</feature>
<feature type="mutagenesis site" description="Loss of tRNA ligase activity." evidence="2">
    <original>S</original>
    <variation>A</variation>
    <location>
        <position position="701"/>
    </location>
</feature>
<feature type="mutagenesis site" description="Loss of tRNA ligase activity due to impaired kinase activity, but conserved CPDase activity." evidence="2 4 5">
    <original>D</original>
    <variation>A</variation>
    <location>
        <position position="726"/>
    </location>
</feature>
<feature type="mutagenesis site" description="Reduced tRNA ligase activity." evidence="2">
    <original>R</original>
    <variation>A</variation>
    <location>
        <position position="804"/>
    </location>
</feature>
<feature type="mutagenesis site" description="Reduced tRNA ligase activity due to reduced CPDase activity." evidence="2 4">
    <original>H</original>
    <variation>A</variation>
    <location>
        <position position="999"/>
    </location>
</feature>
<feature type="mutagenesis site" description="Loss of tRNA ligase activity due to impaired CPDase activity, but conserved kinase activity." evidence="2 4 5">
    <original>T</original>
    <variation>A</variation>
    <location>
        <position position="1001"/>
    </location>
</feature>
<feature type="mutagenesis site" description="Loss of tRNA ligase activity due to reduced CPDase activity." evidence="2 4">
    <original>H</original>
    <variation>A</variation>
    <location>
        <position position="1060"/>
    </location>
</feature>
<feature type="mutagenesis site" description="Reduced CPDase activity." evidence="4">
    <original>T</original>
    <variation>A</variation>
    <location>
        <position position="1062"/>
    </location>
</feature>
<feature type="sequence conflict" description="In Ref. 4; AAB07881." evidence="11" ref="4">
    <location>
        <position position="945"/>
    </location>
</feature>
<feature type="sequence conflict" description="In Ref. 3; BAE98814." evidence="11" ref="3">
    <original>R</original>
    <variation>H</variation>
    <location>
        <position position="1088"/>
    </location>
</feature>
<gene>
    <name evidence="8" type="primary">RNL</name>
    <name evidence="9" type="synonym">RLG1</name>
    <name evidence="13" type="ordered locus">At1g07910</name>
    <name evidence="14" type="ORF">T6D22.1</name>
</gene>
<proteinExistence type="evidence at protein level"/>
<protein>
    <recommendedName>
        <fullName evidence="7">tRNA ligase 1</fullName>
        <shortName evidence="9">AtRLG1</shortName>
        <shortName evidence="8">AtRNL</shortName>
        <shortName evidence="9">AtRlg1p</shortName>
        <ecNumber evidence="1 4 5">6.5.1.3</ecNumber>
    </recommendedName>
    <alternativeName>
        <fullName evidence="10">Protein AT.I.24-9</fullName>
    </alternativeName>
</protein>
<reference key="1">
    <citation type="journal article" date="2000" name="Nature">
        <title>Sequence and analysis of chromosome 1 of the plant Arabidopsis thaliana.</title>
        <authorList>
            <person name="Theologis A."/>
            <person name="Ecker J.R."/>
            <person name="Palm C.J."/>
            <person name="Federspiel N.A."/>
            <person name="Kaul S."/>
            <person name="White O."/>
            <person name="Alonso J."/>
            <person name="Altafi H."/>
            <person name="Araujo R."/>
            <person name="Bowman C.L."/>
            <person name="Brooks S.Y."/>
            <person name="Buehler E."/>
            <person name="Chan A."/>
            <person name="Chao Q."/>
            <person name="Chen H."/>
            <person name="Cheuk R.F."/>
            <person name="Chin C.W."/>
            <person name="Chung M.K."/>
            <person name="Conn L."/>
            <person name="Conway A.B."/>
            <person name="Conway A.R."/>
            <person name="Creasy T.H."/>
            <person name="Dewar K."/>
            <person name="Dunn P."/>
            <person name="Etgu P."/>
            <person name="Feldblyum T.V."/>
            <person name="Feng J.-D."/>
            <person name="Fong B."/>
            <person name="Fujii C.Y."/>
            <person name="Gill J.E."/>
            <person name="Goldsmith A.D."/>
            <person name="Haas B."/>
            <person name="Hansen N.F."/>
            <person name="Hughes B."/>
            <person name="Huizar L."/>
            <person name="Hunter J.L."/>
            <person name="Jenkins J."/>
            <person name="Johnson-Hopson C."/>
            <person name="Khan S."/>
            <person name="Khaykin E."/>
            <person name="Kim C.J."/>
            <person name="Koo H.L."/>
            <person name="Kremenetskaia I."/>
            <person name="Kurtz D.B."/>
            <person name="Kwan A."/>
            <person name="Lam B."/>
            <person name="Langin-Hooper S."/>
            <person name="Lee A."/>
            <person name="Lee J.M."/>
            <person name="Lenz C.A."/>
            <person name="Li J.H."/>
            <person name="Li Y.-P."/>
            <person name="Lin X."/>
            <person name="Liu S.X."/>
            <person name="Liu Z.A."/>
            <person name="Luros J.S."/>
            <person name="Maiti R."/>
            <person name="Marziali A."/>
            <person name="Militscher J."/>
            <person name="Miranda M."/>
            <person name="Nguyen M."/>
            <person name="Nierman W.C."/>
            <person name="Osborne B.I."/>
            <person name="Pai G."/>
            <person name="Peterson J."/>
            <person name="Pham P.K."/>
            <person name="Rizzo M."/>
            <person name="Rooney T."/>
            <person name="Rowley D."/>
            <person name="Sakano H."/>
            <person name="Salzberg S.L."/>
            <person name="Schwartz J.R."/>
            <person name="Shinn P."/>
            <person name="Southwick A.M."/>
            <person name="Sun H."/>
            <person name="Tallon L.J."/>
            <person name="Tambunga G."/>
            <person name="Toriumi M.J."/>
            <person name="Town C.D."/>
            <person name="Utterback T."/>
            <person name="Van Aken S."/>
            <person name="Vaysberg M."/>
            <person name="Vysotskaia V.S."/>
            <person name="Walker M."/>
            <person name="Wu D."/>
            <person name="Yu G."/>
            <person name="Fraser C.M."/>
            <person name="Venter J.C."/>
            <person name="Davis R.W."/>
        </authorList>
    </citation>
    <scope>NUCLEOTIDE SEQUENCE [LARGE SCALE GENOMIC DNA]</scope>
    <source>
        <strain>cv. Columbia</strain>
    </source>
</reference>
<reference key="2">
    <citation type="journal article" date="2017" name="Plant J.">
        <title>Araport11: a complete reannotation of the Arabidopsis thaliana reference genome.</title>
        <authorList>
            <person name="Cheng C.Y."/>
            <person name="Krishnakumar V."/>
            <person name="Chan A.P."/>
            <person name="Thibaud-Nissen F."/>
            <person name="Schobel S."/>
            <person name="Town C.D."/>
        </authorList>
    </citation>
    <scope>GENOME REANNOTATION</scope>
    <source>
        <strain>cv. Columbia</strain>
    </source>
</reference>
<reference key="3">
    <citation type="submission" date="2006-07" db="EMBL/GenBank/DDBJ databases">
        <title>Large-scale analysis of RIKEN Arabidopsis full-length (RAFL) cDNAs.</title>
        <authorList>
            <person name="Totoki Y."/>
            <person name="Seki M."/>
            <person name="Ishida J."/>
            <person name="Nakajima M."/>
            <person name="Enju A."/>
            <person name="Kamiya A."/>
            <person name="Narusaka M."/>
            <person name="Shin-i T."/>
            <person name="Nakagawa M."/>
            <person name="Sakamoto N."/>
            <person name="Oishi K."/>
            <person name="Kohara Y."/>
            <person name="Kobayashi M."/>
            <person name="Toyoda A."/>
            <person name="Sakaki Y."/>
            <person name="Sakurai T."/>
            <person name="Iida K."/>
            <person name="Akiyama K."/>
            <person name="Satou M."/>
            <person name="Toyoda T."/>
            <person name="Konagaya A."/>
            <person name="Carninci P."/>
            <person name="Kawai J."/>
            <person name="Hayashizaki Y."/>
            <person name="Shinozaki K."/>
        </authorList>
    </citation>
    <scope>NUCLEOTIDE SEQUENCE [LARGE SCALE MRNA] (ISOFORMS 1 AND 2)</scope>
    <source>
        <strain>cv. Columbia</strain>
    </source>
</reference>
<reference key="4">
    <citation type="submission" date="1996-07" db="EMBL/GenBank/DDBJ databases">
        <authorList>
            <person name="Tremousaygue D."/>
            <person name="Bardet C."/>
            <person name="Dabos P."/>
            <person name="Regad F."/>
            <person name="Pelese F."/>
            <person name="Lescure B."/>
        </authorList>
    </citation>
    <scope>NUCLEOTIDE SEQUENCE [GENOMIC DNA] OF 282-1103</scope>
    <source>
        <strain>cv. Columbia</strain>
    </source>
</reference>
<reference key="5">
    <citation type="journal article" date="2005" name="Nucleic Acids Res.">
        <title>Plant tRNA ligases are multifunctional enzymes that have diverged in sequence and substrate specificity from RNA ligases of other phylogenetic origins.</title>
        <authorList>
            <person name="Englert M."/>
            <person name="Beier H."/>
        </authorList>
    </citation>
    <scope>FUNCTION</scope>
    <scope>CATALYTIC ACTIVITY</scope>
</reference>
<reference key="6">
    <citation type="journal article" date="2006" name="Nucleic Acids Res.">
        <title>Structure-function analysis of the kinase-CPD domain of yeast tRNA ligase (Trl1) and requirements for complementation of tRNA splicing by a plant Trl1 homolog.</title>
        <authorList>
            <person name="Wang L.K."/>
            <person name="Schwer B."/>
            <person name="Englert M."/>
            <person name="Beier H."/>
            <person name="Shuman S."/>
        </authorList>
    </citation>
    <scope>FUNCTION</scope>
    <scope>MUTAGENESIS OF LYS-152; GLU-218; GLU-326; LYS-541; LYS-543; SER-701; ASP-726; ARG-804; HIS-999; THR-1001 AND HIS-1060</scope>
    <scope>DOMAIN</scope>
</reference>
<reference key="7">
    <citation type="journal article" date="2010" name="Mol. Biol. Cell">
        <title>Dual functions of yeast tRNA ligase in the unfolded protein response: unconventional cytoplasmic splicing of HAC1 pre-mRNA is not sufficient to release translational attenuation.</title>
        <authorList>
            <person name="Mori T."/>
            <person name="Ogasawara C."/>
            <person name="Inada T."/>
            <person name="Englert M."/>
            <person name="Beier H."/>
            <person name="Takezawa M."/>
            <person name="Endo T."/>
            <person name="Yoshihisa T."/>
        </authorList>
    </citation>
    <scope>FUNCTION</scope>
    <scope>SUBCELLULAR LOCATION</scope>
</reference>
<reference key="8">
    <citation type="journal article" date="2013" name="RNA">
        <title>A kinetic framework for tRNA ligase and enforcement of a 2'-phosphate requirement for ligation highlights the design logic of an RNA repair machine.</title>
        <authorList>
            <person name="Remus B.S."/>
            <person name="Shuman S."/>
        </authorList>
    </citation>
    <scope>FUNCTION</scope>
    <scope>MUTAGENESIS OF LYS-152; 700-LYS-SER-701; ASP-726; HIS-999; THR-1001; HIS-1060 AND THR-1062</scope>
    <scope>DOMAIN</scope>
    <scope>CATALYTIC ACTIVITY</scope>
    <scope>ACTIVITY REGULATION</scope>
    <scope>COFACTOR</scope>
    <scope>ACTIVE SITE</scope>
</reference>
<reference key="9">
    <citation type="journal article" date="2014" name="RNA">
        <title>Distinctive kinetics and substrate specificities of plant and fungal tRNA ligases.</title>
        <authorList>
            <person name="Remus B.S."/>
            <person name="Shuman S."/>
        </authorList>
    </citation>
    <scope>FUNCTION</scope>
    <scope>CATALYTIC ACTIVITY</scope>
    <scope>DOMAIN</scope>
    <scope>MUTAGENESIS OF LYS-152; 700-LYS-SER-701; ASP-726 AND THR-1001</scope>
</reference>
<reference key="10">
    <citation type="journal article" date="2015" name="Cell Rep.">
        <title>Meta-regulation of Arabidopsis auxin responses depends on tRNA maturation.</title>
        <authorList>
            <person name="Leitner J."/>
            <person name="Retzer K."/>
            <person name="Malenica N."/>
            <person name="Bartkeviciute R."/>
            <person name="Lucyshyn D."/>
            <person name="Jaeger G."/>
            <person name="Korbei B."/>
            <person name="Bystroem A."/>
            <person name="Luschnig C."/>
        </authorList>
    </citation>
    <scope>FUNCTION</scope>
    <scope>DISRUPTION PHENOTYPE</scope>
    <scope>TISSUE SPECIFICITY</scope>
    <scope>DEVELOPMENTAL STAGE</scope>
    <source>
        <strain>cv. Columbia</strain>
    </source>
</reference>
<comment type="function">
    <text evidence="1 2 3 4 5 6">Essential component of stress-response pathways entailing repair of RNA breaks with 2',3'-cyclic phosphate and 5'-OH ends (PubMed:23515942). Tri-functional enzyme that repairs RNA breaks with 2',3'-cyclic-PO(4) and 5'-OH ends. The ligation activity requires three sequential enzymatic activities: opening of the 2'3'-cyclic phosphodiester bond of the 5' half-tRNA leaving a 2'-phosphomonoester (CPDase activity), phosphorylation of the 5' terminus of the 3' half-tRNA in the presence of ATP (kinase activity) and ligation of the two tRNA halves in an ATP-dependent reaction (ligase activity) (PubMed:23515942, PubMed:24554441). Deficient in transferring AMP to pRNA(OH) to form AppRNA(OH) but proficient at sealing pre-adenylylated AppRNA(OH) (PubMed:23515942). CPDase and kinase reactions are almost insensitive to RNA length, whereas the ligase activity decreases with shorter RNA size. Can also splice DNA ended by a single 3'-terminal ribonucleoside 2',3'-cyclic-PO(4) (PubMed:24554441). Binds to mRNA, mature and immature (PubMed:20844078). Exhibits tRNA ligase activity in vitro (PubMed:15653639, PubMed:24554441). Required for the splicing of precursor tRNA molecules containing introns (PubMed:16428247, PubMed:20844078). Can circularize an intron cleaved from a pre-tRNA by splicing endonuclease in vitro (PubMed:20844078). Seems not involved in unfolded protein response (UPR) in the endoplasmic reticulum (PubMed:20844078). Involved in auxin signaling and polar transport during organ morphogenesis (PubMed:25892242).</text>
</comment>
<comment type="catalytic activity">
    <reaction evidence="1 4 5">
        <text>ATP + (ribonucleotide)n-3'-hydroxyl + 5'-phospho-(ribonucleotide)m = (ribonucleotide)n+m + AMP + diphosphate.</text>
        <dbReference type="EC" id="6.5.1.3"/>
    </reaction>
</comment>
<comment type="cofactor">
    <cofactor evidence="4">
        <name>Mg(2+)</name>
        <dbReference type="ChEBI" id="CHEBI:18420"/>
    </cofactor>
    <text evidence="4">Requires the presence of Mg(2+) to exhibit tRNA ligase activity.</text>
</comment>
<comment type="activity regulation">
    <text evidence="4">Requires the presence of NTP, preferentially ATP rather than dATP, UTP, CTP and GTP, respectively, to mediate ribonucleotide 5'-phosphorylation.</text>
</comment>
<comment type="subcellular location">
    <subcellularLocation>
        <location evidence="11">Nucleus</location>
    </subcellularLocation>
    <subcellularLocation>
        <location evidence="3">Cytoplasm</location>
    </subcellularLocation>
    <text evidence="3">Associated on polysomes.</text>
</comment>
<comment type="alternative products">
    <event type="alternative splicing"/>
    <isoform>
        <id>Q0WL81-1</id>
        <name>1</name>
        <sequence type="displayed"/>
    </isoform>
    <isoform>
        <id>Q0WL81-2</id>
        <name>2</name>
        <sequence type="described" ref="VSP_058828"/>
    </isoform>
    <text evidence="13">Additional isoforms seem to exist.</text>
</comment>
<comment type="tissue specificity">
    <text evidence="6">Mainly expressed in proliferating cells and tissues such as root meristems, the vasculature of developing plantlets, flowers and elongating tissue.</text>
</comment>
<comment type="developmental stage">
    <text evidence="6">During lateral root formation, already visible in stage I lateral root primordia, and accumulates at strong levels during later stages of root development.</text>
</comment>
<comment type="domain">
    <text evidence="4 5 12">Has three domains each corresponding to an enzymatic activity, namely in N- to C-terminal order: ligase, kinase and cyclic phosphodiesterase (CPDase).</text>
</comment>
<comment type="disruption phenotype">
    <text evidence="6">Abnormal auxin responses leading to altered root physiology (e.g. elongation, meristem morphology and gravitropism) and aberrations in cotyledon number and venation. At later developmental stages, reduced apical dominance and aberrations in lateral organ positioning at inflorescence stems.</text>
</comment>
<comment type="similarity">
    <text evidence="11">Belongs to the TRL1 family.</text>
</comment>
<comment type="sequence caution" evidence="11">
    <conflict type="erroneous gene model prediction">
        <sequence resource="EMBL-CDS" id="AAF79821"/>
    </conflict>
</comment>
<accession>Q0WL81</accession>
<accession>Q0WVN4</accession>
<accession>Q0WWW5</accession>
<accession>Q96312</accession>
<accession>Q9LN14</accession>
<evidence type="ECO:0000269" key="1">
    <source>
    </source>
</evidence>
<evidence type="ECO:0000269" key="2">
    <source>
    </source>
</evidence>
<evidence type="ECO:0000269" key="3">
    <source>
    </source>
</evidence>
<evidence type="ECO:0000269" key="4">
    <source>
    </source>
</evidence>
<evidence type="ECO:0000269" key="5">
    <source>
    </source>
</evidence>
<evidence type="ECO:0000269" key="6">
    <source>
    </source>
</evidence>
<evidence type="ECO:0000303" key="7">
    <source>
    </source>
</evidence>
<evidence type="ECO:0000303" key="8">
    <source>
    </source>
</evidence>
<evidence type="ECO:0000303" key="9">
    <source>
    </source>
</evidence>
<evidence type="ECO:0000303" key="10">
    <source ref="4"/>
</evidence>
<evidence type="ECO:0000305" key="11"/>
<evidence type="ECO:0000305" key="12">
    <source>
    </source>
</evidence>
<evidence type="ECO:0000312" key="13">
    <source>
        <dbReference type="Araport" id="AT1G07910"/>
    </source>
</evidence>
<evidence type="ECO:0000312" key="14">
    <source>
        <dbReference type="EMBL" id="AAF79821.1"/>
    </source>
</evidence>
<sequence length="1104" mass="123205">MDAPFESGDSSATVVAEAVNNQFGGLSLKESNTNAPVLPSQTTSNHRVQNLVWKPKSYGTVSGSSSATEVGKTSAVSQIGSSGDTKVGLNLSKIFGGNLLEKFSVDKSTYCHAQIRATFYPKFENEKTDQEIRTRMIEMVSKGLATLEVSLKHSGSLFMYAGHKGGAYAKNSFGNIYTAVGVFVLSRMFREAWGTKAPKKEAEFNDFLEKNRMCISMELVTAVLGDHGQRPLDDYVVVTAVTELGNGKPQFYSTSEIISFCRKWRLPTNHVWLFSTRKSVTSFFAAFDALCEEGIATSVCRALDEVADISVPASKDHVKVQGEILEGLVARIVSSQSSRDMENVLRDHPPPPCDGANLDLGLSLREICAAHRSNEKQQMRALLRSVGPSFCPSDVEWFGDESHPKSADKSVITKFLQSQPADYSTSKLQEMVRLMKEKRLPAAFKCYHNFHRAEDISPDNLFYKLVVHVHSDSGFRRYHKEMRHMPSLWPLYRGFFVDINLFKSNKGRDLMALKSIDNASENDGRGEKDGLADDDANLMIKMKFLTYKLRTFLIRNGLSILFKDGAAAYKTYYLRQMKIWGTSDGKQKELCKMLDEWAAYIRRKCGNDQLSSSTYLSEAEPFLEQYAKRSPKNHILIGSAGNLVRTEDFLAIVDGDLDEEGDLVKKQGVTPATPEPAVKEAVQKDEGLIVFFPGIPGSAKSALCKELLNAPGGFGDDRPVHTLMGDLVKGKYWPKVADERRKKPQSIMLADKNAPNEDVWRQIEDMCRRTRASAVPIVADSEGTDTNPYSLDALAVFMFRVLQRVNHPGKLDKESSNAGYVLLMFYHLYEGKNRNEFESELIERFGSLIKMPLLKSDRTPLPDPVKSVLEEGIDLFNLHSRRHGRLESTKGTYAAEWTKWEKQLRDTLVANSEYLSSIQVPFESMVHQVREELKTIAKGDYKPPSSEKRKHGSIVFAAINLPATQVHSLLEKLAAANPTMRSFLEGKKKSIQEKLERSHVTLAHKRSHGVATVASYSQHLNREVPVELTELIYNDKMAALTAHVGSVDGETVVSKNEWPHVTLWTAEGVTAKEANTLPQLYLEGKASRLVIDPPVSISGPLEFF</sequence>